<protein>
    <recommendedName>
        <fullName evidence="1">Nucleoside triphosphate/diphosphate phosphatase</fullName>
        <ecNumber evidence="1">3.6.1.15</ecNumber>
        <ecNumber evidence="1">3.6.1.6</ecNumber>
    </recommendedName>
</protein>
<keyword id="KW-0378">Hydrolase</keyword>
<keyword id="KW-0460">Magnesium</keyword>
<keyword id="KW-0479">Metal-binding</keyword>
<organism>
    <name type="scientific">Staphylococcus aureus (strain Mu50 / ATCC 700699)</name>
    <dbReference type="NCBI Taxonomy" id="158878"/>
    <lineage>
        <taxon>Bacteria</taxon>
        <taxon>Bacillati</taxon>
        <taxon>Bacillota</taxon>
        <taxon>Bacilli</taxon>
        <taxon>Bacillales</taxon>
        <taxon>Staphylococcaceae</taxon>
        <taxon>Staphylococcus</taxon>
    </lineage>
</organism>
<dbReference type="EC" id="3.6.1.15" evidence="1"/>
<dbReference type="EC" id="3.6.1.6" evidence="1"/>
<dbReference type="EMBL" id="BA000017">
    <property type="protein sequence ID" value="BAB58029.1"/>
    <property type="molecule type" value="Genomic_DNA"/>
</dbReference>
<dbReference type="RefSeq" id="WP_000251253.1">
    <property type="nucleotide sequence ID" value="NC_002758.2"/>
</dbReference>
<dbReference type="SMR" id="Q99T12"/>
<dbReference type="KEGG" id="sav:SAV1867"/>
<dbReference type="HOGENOM" id="CLU_109787_1_0_9"/>
<dbReference type="PhylomeDB" id="Q99T12"/>
<dbReference type="Proteomes" id="UP000002481">
    <property type="component" value="Chromosome"/>
</dbReference>
<dbReference type="GO" id="GO:0000287">
    <property type="term" value="F:magnesium ion binding"/>
    <property type="evidence" value="ECO:0007669"/>
    <property type="project" value="UniProtKB-UniRule"/>
</dbReference>
<dbReference type="GO" id="GO:0017110">
    <property type="term" value="F:nucleoside diphosphate phosphatase activity"/>
    <property type="evidence" value="ECO:0007669"/>
    <property type="project" value="UniProtKB-UniRule"/>
</dbReference>
<dbReference type="GO" id="GO:0017111">
    <property type="term" value="F:ribonucleoside triphosphate phosphatase activity"/>
    <property type="evidence" value="ECO:0007669"/>
    <property type="project" value="UniProtKB-UniRule"/>
</dbReference>
<dbReference type="Gene3D" id="2.40.380.10">
    <property type="entry name" value="FomD-like"/>
    <property type="match status" value="1"/>
</dbReference>
<dbReference type="HAMAP" id="MF_01568">
    <property type="entry name" value="Ntdp"/>
    <property type="match status" value="1"/>
</dbReference>
<dbReference type="InterPro" id="IPR007295">
    <property type="entry name" value="DUF402"/>
</dbReference>
<dbReference type="InterPro" id="IPR035930">
    <property type="entry name" value="FomD-like_sf"/>
</dbReference>
<dbReference type="InterPro" id="IPR050212">
    <property type="entry name" value="Ntdp-like"/>
</dbReference>
<dbReference type="InterPro" id="IPR016882">
    <property type="entry name" value="SA1684"/>
</dbReference>
<dbReference type="NCBIfam" id="NF010183">
    <property type="entry name" value="PRK13662.1"/>
    <property type="match status" value="1"/>
</dbReference>
<dbReference type="PANTHER" id="PTHR39159">
    <property type="match status" value="1"/>
</dbReference>
<dbReference type="PANTHER" id="PTHR39159:SF1">
    <property type="entry name" value="UPF0374 PROTEIN YGAC"/>
    <property type="match status" value="1"/>
</dbReference>
<dbReference type="Pfam" id="PF04167">
    <property type="entry name" value="DUF402"/>
    <property type="match status" value="1"/>
</dbReference>
<dbReference type="PIRSF" id="PIRSF028345">
    <property type="entry name" value="UCP028345"/>
    <property type="match status" value="1"/>
</dbReference>
<dbReference type="SUPFAM" id="SSF159234">
    <property type="entry name" value="FomD-like"/>
    <property type="match status" value="1"/>
</dbReference>
<comment type="function">
    <text evidence="1">Has nucleoside phosphatase activity towards nucleoside triphosphates and nucleoside diphosphates.</text>
</comment>
<comment type="catalytic activity">
    <reaction evidence="1">
        <text>a ribonucleoside 5'-triphosphate + H2O = a ribonucleoside 5'-diphosphate + phosphate + H(+)</text>
        <dbReference type="Rhea" id="RHEA:23680"/>
        <dbReference type="ChEBI" id="CHEBI:15377"/>
        <dbReference type="ChEBI" id="CHEBI:15378"/>
        <dbReference type="ChEBI" id="CHEBI:43474"/>
        <dbReference type="ChEBI" id="CHEBI:57930"/>
        <dbReference type="ChEBI" id="CHEBI:61557"/>
        <dbReference type="EC" id="3.6.1.15"/>
    </reaction>
</comment>
<comment type="catalytic activity">
    <reaction evidence="1">
        <text>a ribonucleoside 5'-diphosphate + H2O = a ribonucleoside 5'-phosphate + phosphate + H(+)</text>
        <dbReference type="Rhea" id="RHEA:36799"/>
        <dbReference type="ChEBI" id="CHEBI:15377"/>
        <dbReference type="ChEBI" id="CHEBI:15378"/>
        <dbReference type="ChEBI" id="CHEBI:43474"/>
        <dbReference type="ChEBI" id="CHEBI:57930"/>
        <dbReference type="ChEBI" id="CHEBI:58043"/>
        <dbReference type="EC" id="3.6.1.6"/>
    </reaction>
</comment>
<comment type="cofactor">
    <cofactor evidence="1">
        <name>Mg(2+)</name>
        <dbReference type="ChEBI" id="CHEBI:18420"/>
    </cofactor>
</comment>
<comment type="similarity">
    <text evidence="1">Belongs to the Ntdp family.</text>
</comment>
<accession>Q99T12</accession>
<evidence type="ECO:0000255" key="1">
    <source>
        <dbReference type="HAMAP-Rule" id="MF_01568"/>
    </source>
</evidence>
<name>NTDP_STAAM</name>
<reference key="1">
    <citation type="journal article" date="2001" name="Lancet">
        <title>Whole genome sequencing of meticillin-resistant Staphylococcus aureus.</title>
        <authorList>
            <person name="Kuroda M."/>
            <person name="Ohta T."/>
            <person name="Uchiyama I."/>
            <person name="Baba T."/>
            <person name="Yuzawa H."/>
            <person name="Kobayashi I."/>
            <person name="Cui L."/>
            <person name="Oguchi A."/>
            <person name="Aoki K."/>
            <person name="Nagai Y."/>
            <person name="Lian J.-Q."/>
            <person name="Ito T."/>
            <person name="Kanamori M."/>
            <person name="Matsumaru H."/>
            <person name="Maruyama A."/>
            <person name="Murakami H."/>
            <person name="Hosoyama A."/>
            <person name="Mizutani-Ui Y."/>
            <person name="Takahashi N.K."/>
            <person name="Sawano T."/>
            <person name="Inoue R."/>
            <person name="Kaito C."/>
            <person name="Sekimizu K."/>
            <person name="Hirakawa H."/>
            <person name="Kuhara S."/>
            <person name="Goto S."/>
            <person name="Yabuzaki J."/>
            <person name="Kanehisa M."/>
            <person name="Yamashita A."/>
            <person name="Oshima K."/>
            <person name="Furuya K."/>
            <person name="Yoshino C."/>
            <person name="Shiba T."/>
            <person name="Hattori M."/>
            <person name="Ogasawara N."/>
            <person name="Hayashi H."/>
            <person name="Hiramatsu K."/>
        </authorList>
    </citation>
    <scope>NUCLEOTIDE SEQUENCE [LARGE SCALE GENOMIC DNA]</scope>
    <source>
        <strain>Mu50 / ATCC 700699</strain>
    </source>
</reference>
<proteinExistence type="inferred from homology"/>
<feature type="chain" id="PRO_0000248108" description="Nucleoside triphosphate/diphosphate phosphatase">
    <location>
        <begin position="1"/>
        <end position="180"/>
    </location>
</feature>
<feature type="active site" description="Proton donor" evidence="1">
    <location>
        <position position="26"/>
    </location>
</feature>
<feature type="binding site" evidence="1">
    <location>
        <position position="90"/>
    </location>
    <ligand>
        <name>Mg(2+)</name>
        <dbReference type="ChEBI" id="CHEBI:18420"/>
        <label>1</label>
    </ligand>
</feature>
<feature type="binding site" evidence="1">
    <location>
        <position position="106"/>
    </location>
    <ligand>
        <name>Mg(2+)</name>
        <dbReference type="ChEBI" id="CHEBI:18420"/>
        <label>1</label>
    </ligand>
</feature>
<feature type="binding site" evidence="1">
    <location>
        <position position="108"/>
    </location>
    <ligand>
        <name>Mg(2+)</name>
        <dbReference type="ChEBI" id="CHEBI:18420"/>
        <label>2</label>
    </ligand>
</feature>
<feature type="binding site" evidence="1">
    <location>
        <position position="110"/>
    </location>
    <ligand>
        <name>Mg(2+)</name>
        <dbReference type="ChEBI" id="CHEBI:18420"/>
        <label>1</label>
    </ligand>
</feature>
<feature type="binding site" evidence="1">
    <location>
        <position position="110"/>
    </location>
    <ligand>
        <name>Mg(2+)</name>
        <dbReference type="ChEBI" id="CHEBI:18420"/>
        <label>2</label>
    </ligand>
</feature>
<feature type="binding site" evidence="1">
    <location>
        <position position="123"/>
    </location>
    <ligand>
        <name>Mg(2+)</name>
        <dbReference type="ChEBI" id="CHEBI:18420"/>
        <label>2</label>
    </ligand>
</feature>
<feature type="binding site" evidence="1">
    <location>
        <position position="126"/>
    </location>
    <ligand>
        <name>Mg(2+)</name>
        <dbReference type="ChEBI" id="CHEBI:18420"/>
        <label>2</label>
    </ligand>
</feature>
<gene>
    <name type="ordered locus">SAV1867</name>
</gene>
<sequence length="180" mass="21704">MVRESIPKEGENIKIQSYKHDGKIHRVWSETTILKGTDHVVIGGNDHTLVTESDGRTWITREPAIVYFHSEYWFNVICMFREDGIYYYCNLSSPFVCDEEALKYIDYDLDIKVYPNGKYHLLDEDEYEQHMNQMNYPHDIDIILRRNVDILQQWIEQKKGPFAPDFIKVWKERYKKIRQY</sequence>